<organismHost>
    <name type="scientific">Lilium formosanum</name>
    <dbReference type="NCBI Taxonomy" id="63788"/>
</organismHost>
<organism>
    <name type="scientific">Lily virus X</name>
    <dbReference type="NCBI Taxonomy" id="12194"/>
    <lineage>
        <taxon>Viruses</taxon>
        <taxon>Riboviria</taxon>
        <taxon>Orthornavirae</taxon>
        <taxon>Kitrinoviricota</taxon>
        <taxon>Alsuviricetes</taxon>
        <taxon>Tymovirales</taxon>
        <taxon>Alphaflexiviridae</taxon>
        <taxon>Potexvirus</taxon>
    </lineage>
</organism>
<dbReference type="EMBL" id="X15342">
    <property type="protein sequence ID" value="CAA33396.1"/>
    <property type="molecule type" value="Genomic_RNA"/>
</dbReference>
<dbReference type="RefSeq" id="YP_263307.1">
    <property type="nucleotide sequence ID" value="NC_007192.1"/>
</dbReference>
<dbReference type="SMR" id="P27334"/>
<dbReference type="GeneID" id="5140999"/>
<dbReference type="KEGG" id="vg:5140999"/>
<dbReference type="OrthoDB" id="15901at10239"/>
<dbReference type="GO" id="GO:0019029">
    <property type="term" value="C:helical viral capsid"/>
    <property type="evidence" value="ECO:0007669"/>
    <property type="project" value="UniProtKB-KW"/>
</dbReference>
<dbReference type="GO" id="GO:1990904">
    <property type="term" value="C:ribonucleoprotein complex"/>
    <property type="evidence" value="ECO:0007669"/>
    <property type="project" value="UniProtKB-KW"/>
</dbReference>
<dbReference type="GO" id="GO:0005198">
    <property type="term" value="F:structural molecule activity"/>
    <property type="evidence" value="ECO:0007669"/>
    <property type="project" value="InterPro"/>
</dbReference>
<dbReference type="InterPro" id="IPR000052">
    <property type="entry name" value="Pltvir_coat"/>
</dbReference>
<dbReference type="Pfam" id="PF00286">
    <property type="entry name" value="Flexi_CP"/>
    <property type="match status" value="1"/>
</dbReference>
<dbReference type="PRINTS" id="PR00232">
    <property type="entry name" value="POTXCARLCOAT"/>
</dbReference>
<dbReference type="PROSITE" id="PS00418">
    <property type="entry name" value="POTEX_CARLAVIRUS_COAT"/>
    <property type="match status" value="1"/>
</dbReference>
<sequence>MTTFVPDAKTWADTAYTAQSESVATAEELQSIATLWEGIGIPAANFFDVAFQLAMRCSDGHASSLTVLSGNCTVAPTVTLKAAAGLVKAVLPLRQFCRYYAKFVWNWRLSHDLPPANWADSQFPAEARFAAFDFFDGVTNSAAPQPPDGLIRPPTELELSAAQTAKFAALARVRGSGFVTTAAEITHGRAEVSRTMLLSPP</sequence>
<proteinExistence type="inferred from homology"/>
<evidence type="ECO:0000305" key="1"/>
<accession>P27334</accession>
<comment type="function">
    <text>Required for genome encapsidation. Forms ribonucleoprotein complexes along with TGB1 helicase and viral RNA.</text>
</comment>
<comment type="subcellular location">
    <subcellularLocation>
        <location evidence="1">Virion</location>
    </subcellularLocation>
</comment>
<comment type="similarity">
    <text evidence="1">Belongs to the potexvirus capsid protein family.</text>
</comment>
<feature type="chain" id="PRO_0000222621" description="Coat protein">
    <location>
        <begin position="1"/>
        <end position="201"/>
    </location>
</feature>
<reference key="1">
    <citation type="journal article" date="1990" name="J. Gen. Virol.">
        <title>Homologies between the genomes of a carlavirus (lily symptomless virus) and a potexvirus (lily virus X) from lily plants.</title>
        <authorList>
            <person name="Memelink J."/>
            <person name="van der Vlugt C.I.M."/>
            <person name="Linthorst H.J.M."/>
            <person name="Derks A.F.L.M."/>
            <person name="Asjes C.J."/>
            <person name="Bol J.F."/>
        </authorList>
    </citation>
    <scope>NUCLEOTIDE SEQUENCE [GENOMIC RNA]</scope>
</reference>
<reference key="2">
    <citation type="journal article" date="2005" name="Mol. Plant Microbe Interact.">
        <title>A new cell-to-cell transport model for Potexviruses.</title>
        <authorList>
            <person name="Verchot-Lubicz J."/>
        </authorList>
    </citation>
    <scope>REVIEW</scope>
</reference>
<protein>
    <recommendedName>
        <fullName>Coat protein</fullName>
    </recommendedName>
    <alternativeName>
        <fullName>Capsid protein</fullName>
        <shortName>CP</shortName>
    </alternativeName>
</protein>
<name>CAPSD_LVX</name>
<keyword id="KW-0167">Capsid protein</keyword>
<keyword id="KW-1139">Helical capsid protein</keyword>
<keyword id="KW-0687">Ribonucleoprotein</keyword>
<keyword id="KW-0946">Virion</keyword>